<evidence type="ECO:0000255" key="1"/>
<evidence type="ECO:0000305" key="2"/>
<reference key="1">
    <citation type="journal article" date="1997" name="Mol. Microbiol.">
        <title>Functional analysis of ssaJ and the ssaK/U operon, 13 genes encoding components of the type III secretion apparatus of Salmonella pathogenicity island 2.</title>
        <authorList>
            <person name="Hensel M."/>
            <person name="Shea J.E."/>
            <person name="Raupach B."/>
            <person name="Monack D."/>
            <person name="Falkow S."/>
            <person name="Gleeson C."/>
            <person name="Kubo T."/>
            <person name="Holden D.W."/>
        </authorList>
    </citation>
    <scope>NUCLEOTIDE SEQUENCE [GENOMIC DNA]</scope>
    <source>
        <strain>LT2</strain>
    </source>
</reference>
<reference key="2">
    <citation type="journal article" date="2001" name="Nature">
        <title>Complete genome sequence of Salmonella enterica serovar Typhimurium LT2.</title>
        <authorList>
            <person name="McClelland M."/>
            <person name="Sanderson K.E."/>
            <person name="Spieth J."/>
            <person name="Clifton S.W."/>
            <person name="Latreille P."/>
            <person name="Courtney L."/>
            <person name="Porwollik S."/>
            <person name="Ali J."/>
            <person name="Dante M."/>
            <person name="Du F."/>
            <person name="Hou S."/>
            <person name="Layman D."/>
            <person name="Leonard S."/>
            <person name="Nguyen C."/>
            <person name="Scott K."/>
            <person name="Holmes A."/>
            <person name="Grewal N."/>
            <person name="Mulvaney E."/>
            <person name="Ryan E."/>
            <person name="Sun H."/>
            <person name="Florea L."/>
            <person name="Miller W."/>
            <person name="Stoneking T."/>
            <person name="Nhan M."/>
            <person name="Waterston R."/>
            <person name="Wilson R.K."/>
        </authorList>
    </citation>
    <scope>NUCLEOTIDE SEQUENCE [LARGE SCALE GENOMIC DNA]</scope>
    <source>
        <strain>LT2 / SGSC1412 / ATCC 700720</strain>
    </source>
</reference>
<dbReference type="EMBL" id="X99944">
    <property type="protein sequence ID" value="CAA68202.1"/>
    <property type="molecule type" value="Genomic_DNA"/>
</dbReference>
<dbReference type="EMBL" id="AE006468">
    <property type="protein sequence ID" value="AAL20346.1"/>
    <property type="molecule type" value="Genomic_DNA"/>
</dbReference>
<dbReference type="RefSeq" id="NP_460387.1">
    <property type="nucleotide sequence ID" value="NC_003197.2"/>
</dbReference>
<dbReference type="RefSeq" id="WP_001291716.1">
    <property type="nucleotide sequence ID" value="NC_003197.2"/>
</dbReference>
<dbReference type="SMR" id="P96069"/>
<dbReference type="STRING" id="99287.STM1422"/>
<dbReference type="MEROPS" id="N06.003"/>
<dbReference type="PaxDb" id="99287-STM1422"/>
<dbReference type="GeneID" id="1252940"/>
<dbReference type="KEGG" id="stm:STM1422"/>
<dbReference type="PATRIC" id="fig|99287.12.peg.1506"/>
<dbReference type="HOGENOM" id="CLU_041013_1_2_6"/>
<dbReference type="OMA" id="QQRMSHE"/>
<dbReference type="PhylomeDB" id="P96069"/>
<dbReference type="BioCyc" id="SENT99287:STM1422-MONOMER"/>
<dbReference type="Proteomes" id="UP000001014">
    <property type="component" value="Chromosome"/>
</dbReference>
<dbReference type="GO" id="GO:0005886">
    <property type="term" value="C:plasma membrane"/>
    <property type="evidence" value="ECO:0000318"/>
    <property type="project" value="GO_Central"/>
</dbReference>
<dbReference type="GO" id="GO:0009306">
    <property type="term" value="P:protein secretion"/>
    <property type="evidence" value="ECO:0007669"/>
    <property type="project" value="InterPro"/>
</dbReference>
<dbReference type="Gene3D" id="3.40.1690.10">
    <property type="entry name" value="secretion proteins EscU"/>
    <property type="match status" value="1"/>
</dbReference>
<dbReference type="InterPro" id="IPR006307">
    <property type="entry name" value="BsaZ-like"/>
</dbReference>
<dbReference type="InterPro" id="IPR006135">
    <property type="entry name" value="T3SS_substrate_exporter"/>
</dbReference>
<dbReference type="InterPro" id="IPR029025">
    <property type="entry name" value="T3SS_substrate_exporter_C"/>
</dbReference>
<dbReference type="NCBIfam" id="TIGR01404">
    <property type="entry name" value="FlhB_rel_III"/>
    <property type="match status" value="1"/>
</dbReference>
<dbReference type="NCBIfam" id="NF009364">
    <property type="entry name" value="PRK12721.1"/>
    <property type="match status" value="1"/>
</dbReference>
<dbReference type="PANTHER" id="PTHR30531">
    <property type="entry name" value="FLAGELLAR BIOSYNTHETIC PROTEIN FLHB"/>
    <property type="match status" value="1"/>
</dbReference>
<dbReference type="PANTHER" id="PTHR30531:SF6">
    <property type="entry name" value="SECRETION SYSTEM APPARATUS PROTEIN SSAU"/>
    <property type="match status" value="1"/>
</dbReference>
<dbReference type="Pfam" id="PF01312">
    <property type="entry name" value="Bac_export_2"/>
    <property type="match status" value="1"/>
</dbReference>
<dbReference type="PRINTS" id="PR00950">
    <property type="entry name" value="TYPE3IMSPROT"/>
</dbReference>
<dbReference type="SUPFAM" id="SSF160544">
    <property type="entry name" value="EscU C-terminal domain-like"/>
    <property type="match status" value="1"/>
</dbReference>
<name>SSAU_SALTY</name>
<gene>
    <name type="primary">ssaU</name>
    <name type="ordered locus">STM1422</name>
</gene>
<keyword id="KW-1003">Cell membrane</keyword>
<keyword id="KW-0472">Membrane</keyword>
<keyword id="KW-0653">Protein transport</keyword>
<keyword id="KW-1185">Reference proteome</keyword>
<keyword id="KW-0812">Transmembrane</keyword>
<keyword id="KW-1133">Transmembrane helix</keyword>
<keyword id="KW-0813">Transport</keyword>
<proteinExistence type="inferred from homology"/>
<organism>
    <name type="scientific">Salmonella typhimurium (strain LT2 / SGSC1412 / ATCC 700720)</name>
    <dbReference type="NCBI Taxonomy" id="99287"/>
    <lineage>
        <taxon>Bacteria</taxon>
        <taxon>Pseudomonadati</taxon>
        <taxon>Pseudomonadota</taxon>
        <taxon>Gammaproteobacteria</taxon>
        <taxon>Enterobacterales</taxon>
        <taxon>Enterobacteriaceae</taxon>
        <taxon>Salmonella</taxon>
    </lineage>
</organism>
<sequence>MSEKTEQPTEKKLRDGRKEGQVVKSIEITSLFQLIALYLYFHFFTEKMILILIESITFTLQLVNKPFSYALTQLSHALIESLTSALLFLGAGVIVATVGSVFLQVGVVIASKAIGFKSEHINPVSNFKQIFSLHSVVELCKSSLKVIMLSLIFAFFFYYYASTFRALPYCGLACGVLVVSSLIKWLWVGVMVFYIVVGILDYSFQYYKIRKDLKMSKDDVKQEHKDLEGDPQMKTRRREMQSEIQSGSLAQSVKQSVAVVRNPTHIAVCLGYHPTDMPIPRVLEKGSDAQANYIVNIAERNCIPVVENVELARSLFFEVERGDKIPETLFEPVAALLRMVMKIDYAHSTETP</sequence>
<accession>P96069</accession>
<protein>
    <recommendedName>
        <fullName>Secretion system apparatus protein SsaU</fullName>
    </recommendedName>
</protein>
<feature type="chain" id="PRO_0000180960" description="Secretion system apparatus protein SsaU">
    <location>
        <begin position="1"/>
        <end position="352"/>
    </location>
</feature>
<feature type="transmembrane region" description="Helical" evidence="1">
    <location>
        <begin position="34"/>
        <end position="54"/>
    </location>
</feature>
<feature type="transmembrane region" description="Helical" evidence="1">
    <location>
        <begin position="89"/>
        <end position="109"/>
    </location>
</feature>
<feature type="transmembrane region" description="Helical" evidence="1">
    <location>
        <begin position="144"/>
        <end position="164"/>
    </location>
</feature>
<feature type="transmembrane region" description="Helical" evidence="1">
    <location>
        <begin position="176"/>
        <end position="196"/>
    </location>
</feature>
<comment type="function">
    <text>Part of a type III secretion system.</text>
</comment>
<comment type="subcellular location">
    <subcellularLocation>
        <location evidence="2">Cell membrane</location>
        <topology evidence="2">Multi-pass membrane protein</topology>
    </subcellularLocation>
</comment>
<comment type="similarity">
    <text evidence="2">Belongs to the type III secretion exporter family.</text>
</comment>